<feature type="signal peptide" evidence="5">
    <location>
        <begin position="1"/>
        <end position="29"/>
    </location>
</feature>
<feature type="chain" id="PRO_0000007471" description="Agrin">
    <location>
        <begin position="30"/>
        <end position="2068"/>
    </location>
</feature>
<feature type="chain" id="PRO_0000421613" description="Agrin N-terminal 110 kDa subunit" evidence="1">
    <location>
        <begin position="30"/>
        <end position="1102"/>
    </location>
</feature>
<feature type="chain" id="PRO_0000421614" description="Agrin C-terminal 110 kDa subunit" evidence="1">
    <location>
        <begin position="1103"/>
        <end position="2068"/>
    </location>
</feature>
<feature type="chain" id="PRO_0000421615" description="Agrin C-terminal 90 kDa fragment" evidence="1">
    <location>
        <begin position="1103"/>
        <end position="1863"/>
    </location>
</feature>
<feature type="chain" id="PRO_0000421616" description="Agrin C-terminal 22 kDa fragment" evidence="1">
    <location>
        <begin position="1864"/>
        <end position="2068"/>
    </location>
</feature>
<feature type="domain" description="NtA" evidence="9">
    <location>
        <begin position="31"/>
        <end position="157"/>
    </location>
</feature>
<feature type="domain" description="Kazal-like 1" evidence="11">
    <location>
        <begin position="191"/>
        <end position="244"/>
    </location>
</feature>
<feature type="domain" description="Kazal-like 2" evidence="11">
    <location>
        <begin position="264"/>
        <end position="319"/>
    </location>
</feature>
<feature type="domain" description="Kazal-like 3" evidence="11">
    <location>
        <begin position="337"/>
        <end position="391"/>
    </location>
</feature>
<feature type="domain" description="Kazal-like 4" evidence="11">
    <location>
        <begin position="408"/>
        <end position="463"/>
    </location>
</feature>
<feature type="domain" description="Kazal-like 5" evidence="11">
    <location>
        <begin position="484"/>
        <end position="536"/>
    </location>
</feature>
<feature type="domain" description="Kazal-like 6" evidence="11">
    <location>
        <begin position="540"/>
        <end position="601"/>
    </location>
</feature>
<feature type="domain" description="Kazal-like 7" evidence="11">
    <location>
        <begin position="607"/>
        <end position="666"/>
    </location>
</feature>
<feature type="domain" description="Kazal-like 8" evidence="11">
    <location>
        <begin position="699"/>
        <end position="752"/>
    </location>
</feature>
<feature type="domain" description="Laminin EGF-like 1" evidence="10">
    <location>
        <begin position="793"/>
        <end position="846"/>
    </location>
</feature>
<feature type="domain" description="Laminin EGF-like 2" evidence="10">
    <location>
        <begin position="847"/>
        <end position="893"/>
    </location>
</feature>
<feature type="domain" description="Kazal-like 9" evidence="11">
    <location>
        <begin position="917"/>
        <end position="971"/>
    </location>
</feature>
<feature type="domain" description="SEA" evidence="8">
    <location>
        <begin position="1130"/>
        <end position="1252"/>
    </location>
</feature>
<feature type="domain" description="EGF-like 1" evidence="6">
    <location>
        <begin position="1329"/>
        <end position="1367"/>
    </location>
</feature>
<feature type="domain" description="Laminin G-like 1" evidence="7">
    <location>
        <begin position="1372"/>
        <end position="1548"/>
    </location>
</feature>
<feature type="domain" description="EGF-like 2" evidence="6">
    <location>
        <begin position="1549"/>
        <end position="1586"/>
    </location>
</feature>
<feature type="domain" description="EGF-like 3" evidence="6">
    <location>
        <begin position="1588"/>
        <end position="1625"/>
    </location>
</feature>
<feature type="domain" description="Laminin G-like 2" evidence="7">
    <location>
        <begin position="1635"/>
        <end position="1822"/>
    </location>
</feature>
<feature type="domain" description="EGF-like 4" evidence="6">
    <location>
        <begin position="1818"/>
        <end position="1857"/>
    </location>
</feature>
<feature type="domain" description="Laminin G-like 3" evidence="7">
    <location>
        <begin position="1868"/>
        <end position="2065"/>
    </location>
</feature>
<feature type="region of interest" description="Disordered" evidence="12">
    <location>
        <begin position="995"/>
        <end position="1096"/>
    </location>
</feature>
<feature type="region of interest" description="Disordered" evidence="12">
    <location>
        <begin position="1277"/>
        <end position="1334"/>
    </location>
</feature>
<feature type="compositionally biased region" description="Low complexity" evidence="12">
    <location>
        <begin position="1023"/>
        <end position="1042"/>
    </location>
</feature>
<feature type="compositionally biased region" description="Low complexity" evidence="12">
    <location>
        <begin position="1050"/>
        <end position="1065"/>
    </location>
</feature>
<feature type="compositionally biased region" description="Low complexity" evidence="12">
    <location>
        <begin position="1297"/>
        <end position="1318"/>
    </location>
</feature>
<feature type="compositionally biased region" description="Pro residues" evidence="12">
    <location>
        <begin position="1321"/>
        <end position="1332"/>
    </location>
</feature>
<feature type="binding site" evidence="3">
    <location>
        <position position="1940"/>
    </location>
    <ligand>
        <name>Ca(2+)</name>
        <dbReference type="ChEBI" id="CHEBI:29108"/>
    </ligand>
</feature>
<feature type="binding site" evidence="3">
    <location>
        <position position="1957"/>
    </location>
    <ligand>
        <name>Ca(2+)</name>
        <dbReference type="ChEBI" id="CHEBI:29108"/>
    </ligand>
</feature>
<feature type="binding site" evidence="3">
    <location>
        <position position="2007"/>
    </location>
    <ligand>
        <name>Ca(2+)</name>
        <dbReference type="ChEBI" id="CHEBI:29108"/>
    </ligand>
</feature>
<feature type="binding site" evidence="3">
    <location>
        <position position="2009"/>
    </location>
    <ligand>
        <name>Ca(2+)</name>
        <dbReference type="ChEBI" id="CHEBI:29108"/>
    </ligand>
</feature>
<feature type="site" description="Cleavage, alpha site; by neurotrypsin" evidence="1">
    <location>
        <begin position="1102"/>
        <end position="1103"/>
    </location>
</feature>
<feature type="site" description="Alternative splice site to produce 'x' isoforms" evidence="1">
    <location>
        <position position="1250"/>
    </location>
</feature>
<feature type="site" description="Alternative splice site to produce 'y' isoforms" evidence="1">
    <location>
        <position position="1751"/>
    </location>
</feature>
<feature type="site" description="Critical for cleavage by neurotrypsin" evidence="1">
    <location>
        <position position="1862"/>
    </location>
</feature>
<feature type="site" description="Cleavage, beta site; by neurotrypsin" evidence="1">
    <location>
        <begin position="1863"/>
        <end position="1864"/>
    </location>
</feature>
<feature type="site" description="Alternative splice site to produce 'z' isoforms" evidence="1">
    <location>
        <position position="1888"/>
    </location>
</feature>
<feature type="site" description="Highly important for the agrin receptor complex activity of the 'z(8)' insert" evidence="1">
    <location>
        <position position="1892"/>
    </location>
</feature>
<feature type="modified residue" description="Phosphoserine" evidence="2">
    <location>
        <position position="674"/>
    </location>
</feature>
<feature type="modified residue" description="Phosphoserine" evidence="2">
    <location>
        <position position="676"/>
    </location>
</feature>
<feature type="glycosylation site" description="N-linked (GlcNAc...) asparagine" evidence="14">
    <location>
        <position position="135"/>
    </location>
</feature>
<feature type="glycosylation site" description="N-linked (GlcNAc...) asparagine" evidence="5">
    <location>
        <position position="250"/>
    </location>
</feature>
<feature type="glycosylation site" description="N-linked (GlcNAc...) asparagine" evidence="5">
    <location>
        <position position="777"/>
    </location>
</feature>
<feature type="glycosylation site" description="N-linked (GlcNAc...) asparagine" evidence="5">
    <location>
        <position position="932"/>
    </location>
</feature>
<feature type="glycosylation site" description="O-linked (Fuc...) serine" evidence="3">
    <location>
        <position position="1835"/>
    </location>
</feature>
<feature type="disulfide bond" evidence="9">
    <location>
        <begin position="31"/>
        <end position="103"/>
    </location>
</feature>
<feature type="disulfide bond" description="Or C-152 with C-183">
    <location>
        <begin position="152"/>
        <end position="177"/>
    </location>
</feature>
<feature type="disulfide bond" evidence="11">
    <location>
        <begin position="197"/>
        <end position="228"/>
    </location>
</feature>
<feature type="disulfide bond" evidence="11">
    <location>
        <begin position="202"/>
        <end position="221"/>
    </location>
</feature>
<feature type="disulfide bond" evidence="11">
    <location>
        <begin position="210"/>
        <end position="242"/>
    </location>
</feature>
<feature type="disulfide bond" evidence="11">
    <location>
        <begin position="270"/>
        <end position="303"/>
    </location>
</feature>
<feature type="disulfide bond" evidence="11">
    <location>
        <begin position="276"/>
        <end position="296"/>
    </location>
</feature>
<feature type="disulfide bond" evidence="11">
    <location>
        <begin position="285"/>
        <end position="317"/>
    </location>
</feature>
<feature type="disulfide bond" evidence="11">
    <location>
        <begin position="349"/>
        <end position="368"/>
    </location>
</feature>
<feature type="disulfide bond" evidence="11">
    <location>
        <begin position="357"/>
        <end position="389"/>
    </location>
</feature>
<feature type="disulfide bond" evidence="11">
    <location>
        <begin position="414"/>
        <end position="447"/>
    </location>
</feature>
<feature type="disulfide bond" evidence="11">
    <location>
        <begin position="421"/>
        <end position="440"/>
    </location>
</feature>
<feature type="disulfide bond" evidence="11">
    <location>
        <begin position="429"/>
        <end position="461"/>
    </location>
</feature>
<feature type="disulfide bond" evidence="11">
    <location>
        <begin position="490"/>
        <end position="520"/>
    </location>
</feature>
<feature type="disulfide bond" evidence="11">
    <location>
        <begin position="494"/>
        <end position="513"/>
    </location>
</feature>
<feature type="disulfide bond" evidence="11">
    <location>
        <begin position="502"/>
        <end position="534"/>
    </location>
</feature>
<feature type="disulfide bond" evidence="11">
    <location>
        <begin position="546"/>
        <end position="585"/>
    </location>
</feature>
<feature type="disulfide bond" evidence="11">
    <location>
        <begin position="555"/>
        <end position="578"/>
    </location>
</feature>
<feature type="disulfide bond" evidence="11">
    <location>
        <begin position="567"/>
        <end position="599"/>
    </location>
</feature>
<feature type="disulfide bond" evidence="11">
    <location>
        <begin position="613"/>
        <end position="650"/>
    </location>
</feature>
<feature type="disulfide bond" evidence="11">
    <location>
        <begin position="623"/>
        <end position="643"/>
    </location>
</feature>
<feature type="disulfide bond" evidence="11">
    <location>
        <begin position="632"/>
        <end position="664"/>
    </location>
</feature>
<feature type="disulfide bond" evidence="11">
    <location>
        <begin position="705"/>
        <end position="736"/>
    </location>
</feature>
<feature type="disulfide bond" evidence="11">
    <location>
        <begin position="709"/>
        <end position="729"/>
    </location>
</feature>
<feature type="disulfide bond" evidence="11">
    <location>
        <begin position="718"/>
        <end position="750"/>
    </location>
</feature>
<feature type="disulfide bond" evidence="1">
    <location>
        <begin position="793"/>
        <end position="805"/>
    </location>
</feature>
<feature type="disulfide bond" evidence="1">
    <location>
        <begin position="795"/>
        <end position="812"/>
    </location>
</feature>
<feature type="disulfide bond" evidence="1">
    <location>
        <begin position="814"/>
        <end position="823"/>
    </location>
</feature>
<feature type="disulfide bond" evidence="1">
    <location>
        <begin position="826"/>
        <end position="844"/>
    </location>
</feature>
<feature type="disulfide bond" evidence="1">
    <location>
        <begin position="847"/>
        <end position="859"/>
    </location>
</feature>
<feature type="disulfide bond" evidence="1">
    <location>
        <begin position="849"/>
        <end position="866"/>
    </location>
</feature>
<feature type="disulfide bond" evidence="1">
    <location>
        <begin position="868"/>
        <end position="877"/>
    </location>
</feature>
<feature type="disulfide bond" evidence="1">
    <location>
        <begin position="880"/>
        <end position="891"/>
    </location>
</feature>
<feature type="disulfide bond" evidence="11">
    <location>
        <begin position="923"/>
        <end position="955"/>
    </location>
</feature>
<feature type="disulfide bond" evidence="11">
    <location>
        <begin position="928"/>
        <end position="948"/>
    </location>
</feature>
<feature type="disulfide bond" evidence="11">
    <location>
        <begin position="937"/>
        <end position="969"/>
    </location>
</feature>
<feature type="disulfide bond" evidence="1">
    <location>
        <begin position="1333"/>
        <end position="1344"/>
    </location>
</feature>
<feature type="disulfide bond" evidence="1">
    <location>
        <begin position="1338"/>
        <end position="1355"/>
    </location>
</feature>
<feature type="disulfide bond" evidence="1">
    <location>
        <begin position="1357"/>
        <end position="1366"/>
    </location>
</feature>
<feature type="disulfide bond" evidence="1">
    <location>
        <begin position="1519"/>
        <end position="1548"/>
    </location>
</feature>
<feature type="disulfide bond" evidence="1">
    <location>
        <begin position="1553"/>
        <end position="1564"/>
    </location>
</feature>
<feature type="disulfide bond" evidence="1">
    <location>
        <begin position="1558"/>
        <end position="1574"/>
    </location>
</feature>
<feature type="disulfide bond" evidence="1">
    <location>
        <begin position="1576"/>
        <end position="1585"/>
    </location>
</feature>
<feature type="disulfide bond" evidence="1">
    <location>
        <begin position="1592"/>
        <end position="1603"/>
    </location>
</feature>
<feature type="disulfide bond" evidence="1">
    <location>
        <begin position="1597"/>
        <end position="1613"/>
    </location>
</feature>
<feature type="disulfide bond" evidence="1">
    <location>
        <begin position="1615"/>
        <end position="1624"/>
    </location>
</feature>
<feature type="disulfide bond" evidence="1">
    <location>
        <begin position="1822"/>
        <end position="1836"/>
    </location>
</feature>
<feature type="disulfide bond" evidence="1">
    <location>
        <begin position="1830"/>
        <end position="1845"/>
    </location>
</feature>
<feature type="disulfide bond" evidence="1">
    <location>
        <begin position="1847"/>
        <end position="1856"/>
    </location>
</feature>
<feature type="disulfide bond" evidence="1">
    <location>
        <begin position="2039"/>
        <end position="2065"/>
    </location>
</feature>
<feature type="splice variant" id="VSP_045753" description="In isoform 2." evidence="24">
    <location>
        <begin position="1"/>
        <end position="104"/>
    </location>
</feature>
<feature type="splice variant" id="VSP_045754" description="In isoform 2." evidence="24">
    <original>NQVSTGDTRIFFVNPAPPYLWPAHKNELMLNSSLMRITLRNLEEVEFCVE</original>
    <variation>MPXLAVARDTRQPAGASLLVRGFMVPCNACLILLATATLGFAVLLFLNNY</variation>
    <location>
        <begin position="105"/>
        <end position="154"/>
    </location>
</feature>
<feature type="splice variant" id="VSP_045755" description="In isoform 6 and isoform 7." evidence="24">
    <location>
        <begin position="1752"/>
        <end position="1755"/>
    </location>
</feature>
<feature type="splice variant" id="VSP_045756" description="In isoform 3 and isoform 6." evidence="22 23">
    <location>
        <begin position="1889"/>
        <end position="1907"/>
    </location>
</feature>
<feature type="splice variant" id="VSP_045757" description="In isoform 4." evidence="24">
    <location>
        <begin position="1889"/>
        <end position="1896"/>
    </location>
</feature>
<feature type="splice variant" id="VSP_045758" description="In isoform 5." evidence="24">
    <location>
        <begin position="1897"/>
        <end position="1907"/>
    </location>
</feature>
<feature type="sequence variant" id="VAR_068724" evidence="15">
    <original>V</original>
    <variation>L</variation>
    <location>
        <position position="23"/>
    </location>
</feature>
<feature type="sequence variant" id="VAR_068725" evidence="15">
    <original>D</original>
    <variation>N</variation>
    <location>
        <position position="58"/>
    </location>
</feature>
<feature type="sequence variant" id="VAR_071367" description="In CMS8; results in decreased AChR clustering." evidence="19">
    <original>G</original>
    <variation>S</variation>
    <location>
        <position position="76"/>
    </location>
</feature>
<feature type="sequence variant" id="VAR_068726" description="In CMS8; results in decreased AChR clustering." evidence="15 19">
    <original>N</original>
    <variation>I</variation>
    <location>
        <position position="105"/>
    </location>
</feature>
<feature type="sequence variant" id="VAR_068727" evidence="15">
    <original>T</original>
    <variation>M</variation>
    <location>
        <position position="267"/>
    </location>
</feature>
<feature type="sequence variant" id="VAR_068728" description="In dbSNP:rs138031468." evidence="15">
    <original>A</original>
    <variation>S</variation>
    <location>
        <position position="375"/>
    </location>
</feature>
<feature type="sequence variant" id="VAR_068729" description="In dbSNP:rs113288277." evidence="15">
    <original>E</original>
    <variation>V</variation>
    <location>
        <position position="728"/>
    </location>
</feature>
<feature type="sequence variant" id="VAR_071368" evidence="19">
    <original>A</original>
    <variation>V</variation>
    <location>
        <position position="745"/>
    </location>
</feature>
<feature type="sequence variant" id="VAR_068730" description="In dbSNP:rs9697293." evidence="15">
    <original>Q</original>
    <variation>R</variation>
    <location>
        <position position="852"/>
    </location>
</feature>
<feature type="sequence variant" id="VAR_068731" evidence="15">
    <original>V</original>
    <variation>M</variation>
    <location>
        <position position="984"/>
    </location>
</feature>
<feature type="sequence variant" id="VAR_068732" description="In dbSNP:rs150132566." evidence="15">
    <original>L</original>
    <variation>F</variation>
    <location>
        <position position="1088"/>
    </location>
</feature>
<feature type="sequence variant" id="VAR_068733" description="In dbSNP:rs149159118." evidence="15">
    <original>T</original>
    <variation>K</variation>
    <location>
        <position position="1118"/>
    </location>
</feature>
<feature type="sequence variant" id="VAR_068734" description="In dbSNP:rs142416636." evidence="15">
    <original>Q</original>
    <variation>R</variation>
    <location>
        <position position="1135"/>
    </location>
</feature>
<feature type="sequence variant" id="VAR_068735" description="In dbSNP:rs142620337." evidence="15">
    <original>P</original>
    <variation>L</variation>
    <location>
        <position position="1240"/>
    </location>
</feature>
<feature type="sequence variant" id="VAR_068736" evidence="15">
    <original>G</original>
    <variation>R</variation>
    <location>
        <position position="1341"/>
    </location>
</feature>
<feature type="sequence variant" id="VAR_068737" evidence="15">
    <original>P</original>
    <variation>L</variation>
    <location>
        <position position="1451"/>
    </location>
</feature>
<feature type="sequence variant" id="VAR_068738" description="In dbSNP:rs111818381." evidence="15">
    <original>A</original>
    <variation>T</variation>
    <location>
        <position position="1514"/>
    </location>
</feature>
<feature type="sequence variant" id="VAR_068739" description="In dbSNP:rs199876002." evidence="15">
    <original>Q</original>
    <variation>H</variation>
    <location>
        <position position="1565"/>
    </location>
</feature>
<feature type="sequence variant" id="VAR_048966" description="In dbSNP:rs17160775." evidence="15">
    <original>V</original>
    <variation>I</variation>
    <location>
        <position position="1666"/>
    </location>
</feature>
<feature type="sequence variant" id="VAR_068740" evidence="15">
    <original>R</original>
    <variation>Q</variation>
    <location>
        <position position="1671"/>
    </location>
</feature>
<feature type="sequence variant" id="VAR_068741" evidence="15">
    <original>R</original>
    <variation>P</variation>
    <location>
        <position position="1698"/>
    </location>
</feature>
<feature type="sequence variant" id="VAR_068742" description="In CMS8; results in disruption of the neuromuscular junction architecture; does not affect phosphorylation of MUSK; does not affect AChR clustering." evidence="15">
    <original>G</original>
    <variation>R</variation>
    <location>
        <position position="1709"/>
    </location>
</feature>
<feature type="sequence variant" id="VAR_069066" description="In CMS8; decreased AGRN-induced clustering of AChR by &gt;100-fold and decreased phosphorylation of the MUSK receptor and AChR beta subunit by about 10-fold. Increased binding to alpha-dystroglycan." evidence="18">
    <original>V</original>
    <variation>F</variation>
    <location>
        <position position="1727"/>
    </location>
</feature>
<feature type="sequence variant" id="VAR_068743" description="In dbSNP:rs145444272." evidence="15">
    <original>R</original>
    <variation>H</variation>
    <location>
        <position position="1734"/>
    </location>
</feature>
<feature type="sequence variant" id="VAR_068744" evidence="15">
    <original>D</original>
    <variation>N</variation>
    <location>
        <position position="1789"/>
    </location>
</feature>
<feature type="sequence variant" id="VAR_071369" description="In CMS8." evidence="19">
    <original>G</original>
    <variation>R</variation>
    <location>
        <position position="1875"/>
    </location>
</feature>
<feature type="sequence variant" id="VAR_068745" evidence="15">
    <original>G</original>
    <variation>V</variation>
    <location>
        <position position="2046"/>
    </location>
</feature>
<feature type="sequence conflict" description="In Ref. 3; AAC39776." evidence="24" ref="3">
    <original>L</original>
    <variation>R</variation>
    <location>
        <position position="343"/>
    </location>
</feature>
<keyword id="KW-0002">3D-structure</keyword>
<keyword id="KW-0025">Alternative splicing</keyword>
<keyword id="KW-0106">Calcium</keyword>
<keyword id="KW-1003">Cell membrane</keyword>
<keyword id="KW-1004">Congenital myasthenic syndrome</keyword>
<keyword id="KW-0217">Developmental protein</keyword>
<keyword id="KW-0221">Differentiation</keyword>
<keyword id="KW-0225">Disease variant</keyword>
<keyword id="KW-1015">Disulfide bond</keyword>
<keyword id="KW-0245">EGF-like domain</keyword>
<keyword id="KW-0272">Extracellular matrix</keyword>
<keyword id="KW-0325">Glycoprotein</keyword>
<keyword id="KW-0357">Heparan sulfate</keyword>
<keyword id="KW-0424">Laminin EGF-like domain</keyword>
<keyword id="KW-0472">Membrane</keyword>
<keyword id="KW-0479">Metal-binding</keyword>
<keyword id="KW-0597">Phosphoprotein</keyword>
<keyword id="KW-0654">Proteoglycan</keyword>
<keyword id="KW-1267">Proteomics identification</keyword>
<keyword id="KW-1185">Reference proteome</keyword>
<keyword id="KW-0677">Repeat</keyword>
<keyword id="KW-0964">Secreted</keyword>
<keyword id="KW-0732">Signal</keyword>
<keyword id="KW-0770">Synapse</keyword>
<keyword id="KW-0812">Transmembrane</keyword>
<keyword id="KW-1133">Transmembrane helix</keyword>
<organism>
    <name type="scientific">Homo sapiens</name>
    <name type="common">Human</name>
    <dbReference type="NCBI Taxonomy" id="9606"/>
    <lineage>
        <taxon>Eukaryota</taxon>
        <taxon>Metazoa</taxon>
        <taxon>Chordata</taxon>
        <taxon>Craniata</taxon>
        <taxon>Vertebrata</taxon>
        <taxon>Euteleostomi</taxon>
        <taxon>Mammalia</taxon>
        <taxon>Eutheria</taxon>
        <taxon>Euarchontoglires</taxon>
        <taxon>Primates</taxon>
        <taxon>Haplorrhini</taxon>
        <taxon>Catarrhini</taxon>
        <taxon>Hominidae</taxon>
        <taxon>Homo</taxon>
    </lineage>
</organism>
<reference key="1">
    <citation type="submission" date="2004-09" db="EMBL/GenBank/DDBJ databases">
        <authorList>
            <person name="Kato S."/>
        </authorList>
    </citation>
    <scope>NUCLEOTIDE SEQUENCE [MRNA] (ISOFORM 6)</scope>
    <source>
        <tissue>Retinal pigment epithelium</tissue>
    </source>
</reference>
<reference key="2">
    <citation type="journal article" date="2006" name="Nature">
        <title>The DNA sequence and biological annotation of human chromosome 1.</title>
        <authorList>
            <person name="Gregory S.G."/>
            <person name="Barlow K.F."/>
            <person name="McLay K.E."/>
            <person name="Kaul R."/>
            <person name="Swarbreck D."/>
            <person name="Dunham A."/>
            <person name="Scott C.E."/>
            <person name="Howe K.L."/>
            <person name="Woodfine K."/>
            <person name="Spencer C.C.A."/>
            <person name="Jones M.C."/>
            <person name="Gillson C."/>
            <person name="Searle S."/>
            <person name="Zhou Y."/>
            <person name="Kokocinski F."/>
            <person name="McDonald L."/>
            <person name="Evans R."/>
            <person name="Phillips K."/>
            <person name="Atkinson A."/>
            <person name="Cooper R."/>
            <person name="Jones C."/>
            <person name="Hall R.E."/>
            <person name="Andrews T.D."/>
            <person name="Lloyd C."/>
            <person name="Ainscough R."/>
            <person name="Almeida J.P."/>
            <person name="Ambrose K.D."/>
            <person name="Anderson F."/>
            <person name="Andrew R.W."/>
            <person name="Ashwell R.I.S."/>
            <person name="Aubin K."/>
            <person name="Babbage A.K."/>
            <person name="Bagguley C.L."/>
            <person name="Bailey J."/>
            <person name="Beasley H."/>
            <person name="Bethel G."/>
            <person name="Bird C.P."/>
            <person name="Bray-Allen S."/>
            <person name="Brown J.Y."/>
            <person name="Brown A.J."/>
            <person name="Buckley D."/>
            <person name="Burton J."/>
            <person name="Bye J."/>
            <person name="Carder C."/>
            <person name="Chapman J.C."/>
            <person name="Clark S.Y."/>
            <person name="Clarke G."/>
            <person name="Clee C."/>
            <person name="Cobley V."/>
            <person name="Collier R.E."/>
            <person name="Corby N."/>
            <person name="Coville G.J."/>
            <person name="Davies J."/>
            <person name="Deadman R."/>
            <person name="Dunn M."/>
            <person name="Earthrowl M."/>
            <person name="Ellington A.G."/>
            <person name="Errington H."/>
            <person name="Frankish A."/>
            <person name="Frankland J."/>
            <person name="French L."/>
            <person name="Garner P."/>
            <person name="Garnett J."/>
            <person name="Gay L."/>
            <person name="Ghori M.R.J."/>
            <person name="Gibson R."/>
            <person name="Gilby L.M."/>
            <person name="Gillett W."/>
            <person name="Glithero R.J."/>
            <person name="Grafham D.V."/>
            <person name="Griffiths C."/>
            <person name="Griffiths-Jones S."/>
            <person name="Grocock R."/>
            <person name="Hammond S."/>
            <person name="Harrison E.S.I."/>
            <person name="Hart E."/>
            <person name="Haugen E."/>
            <person name="Heath P.D."/>
            <person name="Holmes S."/>
            <person name="Holt K."/>
            <person name="Howden P.J."/>
            <person name="Hunt A.R."/>
            <person name="Hunt S.E."/>
            <person name="Hunter G."/>
            <person name="Isherwood J."/>
            <person name="James R."/>
            <person name="Johnson C."/>
            <person name="Johnson D."/>
            <person name="Joy A."/>
            <person name="Kay M."/>
            <person name="Kershaw J.K."/>
            <person name="Kibukawa M."/>
            <person name="Kimberley A.M."/>
            <person name="King A."/>
            <person name="Knights A.J."/>
            <person name="Lad H."/>
            <person name="Laird G."/>
            <person name="Lawlor S."/>
            <person name="Leongamornlert D.A."/>
            <person name="Lloyd D.M."/>
            <person name="Loveland J."/>
            <person name="Lovell J."/>
            <person name="Lush M.J."/>
            <person name="Lyne R."/>
            <person name="Martin S."/>
            <person name="Mashreghi-Mohammadi M."/>
            <person name="Matthews L."/>
            <person name="Matthews N.S.W."/>
            <person name="McLaren S."/>
            <person name="Milne S."/>
            <person name="Mistry S."/>
            <person name="Moore M.J.F."/>
            <person name="Nickerson T."/>
            <person name="O'Dell C.N."/>
            <person name="Oliver K."/>
            <person name="Palmeiri A."/>
            <person name="Palmer S.A."/>
            <person name="Parker A."/>
            <person name="Patel D."/>
            <person name="Pearce A.V."/>
            <person name="Peck A.I."/>
            <person name="Pelan S."/>
            <person name="Phelps K."/>
            <person name="Phillimore B.J."/>
            <person name="Plumb R."/>
            <person name="Rajan J."/>
            <person name="Raymond C."/>
            <person name="Rouse G."/>
            <person name="Saenphimmachak C."/>
            <person name="Sehra H.K."/>
            <person name="Sheridan E."/>
            <person name="Shownkeen R."/>
            <person name="Sims S."/>
            <person name="Skuce C.D."/>
            <person name="Smith M."/>
            <person name="Steward C."/>
            <person name="Subramanian S."/>
            <person name="Sycamore N."/>
            <person name="Tracey A."/>
            <person name="Tromans A."/>
            <person name="Van Helmond Z."/>
            <person name="Wall M."/>
            <person name="Wallis J.M."/>
            <person name="White S."/>
            <person name="Whitehead S.L."/>
            <person name="Wilkinson J.E."/>
            <person name="Willey D.L."/>
            <person name="Williams H."/>
            <person name="Wilming L."/>
            <person name="Wray P.W."/>
            <person name="Wu Z."/>
            <person name="Coulson A."/>
            <person name="Vaudin M."/>
            <person name="Sulston J.E."/>
            <person name="Durbin R.M."/>
            <person name="Hubbard T."/>
            <person name="Wooster R."/>
            <person name="Dunham I."/>
            <person name="Carter N.P."/>
            <person name="McVean G."/>
            <person name="Ross M.T."/>
            <person name="Harrow J."/>
            <person name="Olson M.V."/>
            <person name="Beck S."/>
            <person name="Rogers J."/>
            <person name="Bentley D.R."/>
        </authorList>
    </citation>
    <scope>NUCLEOTIDE SEQUENCE [LARGE SCALE GENOMIC DNA]</scope>
</reference>
<reference key="3">
    <citation type="journal article" date="1998" name="Eur. J. Biochem.">
        <title>Primary structure and high expression of human agrin in basement membranes of adult lung and kidney.</title>
        <authorList>
            <person name="Groffen A.J.A."/>
            <person name="Buskens C.A.F."/>
            <person name="Van Kuppevelt T.H."/>
            <person name="Veerkamp J.H."/>
            <person name="Monnens L.A.H."/>
            <person name="Van den Heuvel L.P.W.J."/>
        </authorList>
    </citation>
    <scope>NUCLEOTIDE SEQUENCE [MRNA] OF 20-2068 (ISOFORM 6)</scope>
    <scope>TISSUE SPECIFICITY</scope>
</reference>
<reference key="4">
    <citation type="journal article" date="1997" name="J. Cell Biol.">
        <title>Agrin binds to the nerve-muscle basal lamina via laminin.</title>
        <authorList>
            <person name="Denzer A.J."/>
            <person name="Brandenberger R."/>
            <person name="Gesemann M."/>
            <person name="Chiquet M."/>
            <person name="Ruegg M.A."/>
        </authorList>
    </citation>
    <scope>NUCLEOTIDE SEQUENCE [MRNA] OF 20-172 (ISOFORMS 1/3/4/5/6/7)</scope>
    <scope>INTERACTION WITH LAMININ</scope>
</reference>
<reference key="5">
    <citation type="journal article" date="2004" name="Genome Res.">
        <title>The status, quality, and expansion of the NIH full-length cDNA project: the Mammalian Gene Collection (MGC).</title>
        <authorList>
            <consortium name="The MGC Project Team"/>
        </authorList>
    </citation>
    <scope>NUCLEOTIDE SEQUENCE [LARGE SCALE MRNA] OF 1558-2068 (ISOFORM 6)</scope>
    <scope>NUCLEOTIDE SEQUENCE [LARGE SCALE MRNA] OF 1869-2068 (ISOFORM 3)</scope>
    <source>
        <tissue>Brain</tissue>
        <tissue>Colon</tissue>
        <tissue>Kidney</tissue>
    </source>
</reference>
<reference key="6">
    <citation type="journal article" date="2001" name="Mol. Cell. Neurosci.">
        <title>An alternative amino-terminus expressed in the central nervous system converts agrin to a type II transmembrane protein.</title>
        <authorList>
            <person name="Neumann F.R."/>
            <person name="Bittcher G."/>
            <person name="Annies M."/>
            <person name="Schumacher B."/>
            <person name="Kroger S."/>
            <person name="Ruegg M.A."/>
        </authorList>
    </citation>
    <scope>IDENTIFICATION OF TRANSMEMBRANE ISOFORM (ISOFORM 2)</scope>
</reference>
<reference key="7">
    <citation type="journal article" date="2006" name="Biochem. Biophys. Res. Commun.">
        <title>Identification of agrinSN isoform and muscle-specific receptor tyrosine kinase (MuSK) in sperm.</title>
        <authorList>
            <person name="Kumar P."/>
            <person name="Ferns M.J."/>
            <person name="Meizel S."/>
        </authorList>
    </citation>
    <scope>IDENTIFICATION OF TRANSMEMBRANE ISOFORM (ISOFORM 2)</scope>
    <scope>ALTERNATIVE SPLICING</scope>
    <scope>TISSUE SPECIFICITY</scope>
</reference>
<reference key="8">
    <citation type="journal article" date="2006" name="Biochem. Biophys. Res. Commun.">
        <authorList>
            <person name="Kumar P."/>
            <person name="Ferns M.J."/>
            <person name="Meizel S."/>
        </authorList>
    </citation>
    <scope>ERRATUM OF PUBMED:16487930</scope>
</reference>
<reference key="9">
    <citation type="journal article" date="2009" name="J. Proteome Res.">
        <title>Glycoproteomics analysis of human liver tissue by combination of multiple enzyme digestion and hydrazide chemistry.</title>
        <authorList>
            <person name="Chen R."/>
            <person name="Jiang X."/>
            <person name="Sun D."/>
            <person name="Han G."/>
            <person name="Wang F."/>
            <person name="Ye M."/>
            <person name="Wang L."/>
            <person name="Zou H."/>
        </authorList>
    </citation>
    <scope>GLYCOSYLATION [LARGE SCALE ANALYSIS] AT ASN-135</scope>
    <source>
        <tissue>Liver</tissue>
    </source>
</reference>
<reference key="10">
    <citation type="journal article" date="2010" name="Mol. Cell. Proteomics">
        <title>Proteomics characterization of extracellular space components in the human aorta.</title>
        <authorList>
            <person name="Didangelos A."/>
            <person name="Yin X."/>
            <person name="Mandal K."/>
            <person name="Baumert M."/>
            <person name="Jahangiri M."/>
            <person name="Mayr M."/>
        </authorList>
    </citation>
    <scope>IDENTIFICATION BY MASS SPECTROMETRY</scope>
    <scope>TISSUE SPECIFICITY</scope>
    <scope>SUBCELLULAR LOCATION</scope>
</reference>
<reference key="11">
    <citation type="journal article" date="2011" name="J. Biol. Chem.">
        <title>Agrin binds to the N-terminal region of Lrp4 protein and stimulates association between Lrp4 and the first immunoglobulin-like domain in muscle-specific kinase (MuSK).</title>
        <authorList>
            <person name="Zhang W."/>
            <person name="Coldefy A.S."/>
            <person name="Hubbard S.R."/>
            <person name="Burden S.J."/>
        </authorList>
    </citation>
    <scope>INTERACTION WITH LRP4</scope>
    <scope>FUNCTION</scope>
</reference>
<reference key="12">
    <citation type="journal article" date="2013" name="Exp. Gerontol.">
        <title>C-terminal Agrin Fragment as a potential marker for sarcopenia caused by degeneration of the neuromuscular junction.</title>
        <authorList>
            <person name="Drey M."/>
            <person name="Sieber C.C."/>
            <person name="Bauer J.M."/>
            <person name="Uter W."/>
            <person name="Dahinden P."/>
            <person name="Fariello R.G."/>
            <person name="Vrijbloed J.W."/>
        </authorList>
    </citation>
    <scope>POTENTIAL USAGE AS A BIOMARKER FOR SARCOPENIA</scope>
</reference>
<reference key="13">
    <citation type="journal article" date="2009" name="Am. J. Hum. Genet.">
        <title>Identification of an agrin mutation that causes congenital myasthenia and affects synapse function.</title>
        <authorList>
            <person name="Huze C."/>
            <person name="Bauche S."/>
            <person name="Richard P."/>
            <person name="Chevessier F."/>
            <person name="Goillot E."/>
            <person name="Gaudon K."/>
            <person name="Ben Ammar A."/>
            <person name="Chaboud A."/>
            <person name="Grosjean I."/>
            <person name="Lecuyer H.A."/>
            <person name="Bernard V."/>
            <person name="Rouche A."/>
            <person name="Alexandri N."/>
            <person name="Kuntzer T."/>
            <person name="Fardeau M."/>
            <person name="Fournier E."/>
            <person name="Brancaccio A."/>
            <person name="Ruegg M.A."/>
            <person name="Koenig J."/>
            <person name="Eymard B."/>
            <person name="Schaeffer L."/>
            <person name="Hantai D."/>
        </authorList>
    </citation>
    <scope>INVOLVEMENT IN CMS8</scope>
    <scope>VARIANT CMS8 ARG-1709</scope>
    <scope>VARIANTS LEU-23; ASN-58; ILE-105; MET-267; SER-375; VAL-728; ARG-852; MET-984; PHE-1088; LYS-1118; ARG-1135; LEU-1240; ARG-1341; LEU-1451; THR-1514; HIS-1565; ILE-1666; GLN-1671; PRO-1698; HIS-1734; ASN-1789 AND VAL-2046</scope>
    <scope>FUNCTION</scope>
    <scope>CHARACTERIZATION OF VARIANT CMS8 ARG-1709</scope>
</reference>
<reference key="14">
    <citation type="journal article" date="2009" name="Am. J. Hum. Genet.">
        <authorList>
            <person name="Huze C."/>
            <person name="Bauche S."/>
            <person name="Richard P."/>
            <person name="Chevessier F."/>
            <person name="Goillot E."/>
            <person name="Gaudon K."/>
            <person name="Ben Ammar A."/>
            <person name="Chaboud A."/>
            <person name="Grosjean I."/>
            <person name="Lecuyer H.A."/>
            <person name="Bernard V."/>
            <person name="Rouche A."/>
            <person name="Alexandri N."/>
            <person name="Kuntzer T."/>
            <person name="Fardeau M."/>
            <person name="Fournier E."/>
            <person name="Brancaccio A."/>
            <person name="Ruegg M.A."/>
            <person name="Koenig J."/>
            <person name="Eymard B."/>
            <person name="Schaeffer L."/>
            <person name="Hantai D."/>
        </authorList>
    </citation>
    <scope>ERRATUM OF PUBMED:19631309</scope>
</reference>
<reference key="15">
    <citation type="journal article" date="2012" name="Hum. Genet.">
        <title>LG2 agrin mutation causing severe congenital myasthenic syndrome mimics functional characteristics of non-neural (z-) agrin.</title>
        <authorList>
            <person name="Maselli R.A."/>
            <person name="Fernandez J.M."/>
            <person name="Arredondo J."/>
            <person name="Navarro C."/>
            <person name="Ngo M."/>
            <person name="Beeson D."/>
            <person name="Cagney O."/>
            <person name="Williams D.C."/>
            <person name="Wollmann R.L."/>
            <person name="Yarov-Yarovoy V."/>
            <person name="Ferns M.J."/>
        </authorList>
    </citation>
    <scope>VARIANT CMS8 PHE-1727</scope>
    <scope>INTERACTION WITH DAG1</scope>
    <scope>CHARACTERIZATION OF VARIANT CMS8 PHE-1727</scope>
</reference>
<reference key="16">
    <citation type="journal article" date="2014" name="Brain">
        <title>Agrin mutations lead to a congenital myasthenic syndrome with distal muscle weakness and atrophy.</title>
        <authorList>
            <person name="Nicole S."/>
            <person name="Chaouch A."/>
            <person name="Torbergsen T."/>
            <person name="Bauche S."/>
            <person name="de Bruyckere E."/>
            <person name="Fontenille M.J."/>
            <person name="Horn M.A."/>
            <person name="van Ghelue M."/>
            <person name="Loeseth S."/>
            <person name="Issop Y."/>
            <person name="Cox D."/>
            <person name="Mueller J.S."/>
            <person name="Evangelista T."/>
            <person name="Staalberg E."/>
            <person name="Ioos C."/>
            <person name="Barois A."/>
            <person name="Brochier G."/>
            <person name="Sternberg D."/>
            <person name="Fournier E."/>
            <person name="Hantai D."/>
            <person name="Abicht A."/>
            <person name="Dusl M."/>
            <person name="Laval S.H."/>
            <person name="Griffin H."/>
            <person name="Eymard B."/>
            <person name="Lochmueller H."/>
        </authorList>
    </citation>
    <scope>VARIANT VAL-745</scope>
    <scope>VARIANTS CMS8 SER-76; ILE-105 AND ARG-1875</scope>
    <scope>CHARACTERIZATION OF VARIANTS CMS8 SER-76 AND ILE-105</scope>
</reference>
<evidence type="ECO:0000250" key="1"/>
<evidence type="ECO:0000250" key="2">
    <source>
        <dbReference type="UniProtKB" id="A2ASQ1"/>
    </source>
</evidence>
<evidence type="ECO:0000250" key="3">
    <source>
        <dbReference type="UniProtKB" id="P25304"/>
    </source>
</evidence>
<evidence type="ECO:0000250" key="4">
    <source>
        <dbReference type="UniProtKB" id="P31696"/>
    </source>
</evidence>
<evidence type="ECO:0000255" key="5"/>
<evidence type="ECO:0000255" key="6">
    <source>
        <dbReference type="PROSITE-ProRule" id="PRU00076"/>
    </source>
</evidence>
<evidence type="ECO:0000255" key="7">
    <source>
        <dbReference type="PROSITE-ProRule" id="PRU00122"/>
    </source>
</evidence>
<evidence type="ECO:0000255" key="8">
    <source>
        <dbReference type="PROSITE-ProRule" id="PRU00188"/>
    </source>
</evidence>
<evidence type="ECO:0000255" key="9">
    <source>
        <dbReference type="PROSITE-ProRule" id="PRU00443"/>
    </source>
</evidence>
<evidence type="ECO:0000255" key="10">
    <source>
        <dbReference type="PROSITE-ProRule" id="PRU00460"/>
    </source>
</evidence>
<evidence type="ECO:0000255" key="11">
    <source>
        <dbReference type="PROSITE-ProRule" id="PRU00798"/>
    </source>
</evidence>
<evidence type="ECO:0000256" key="12">
    <source>
        <dbReference type="SAM" id="MobiDB-lite"/>
    </source>
</evidence>
<evidence type="ECO:0000269" key="13">
    <source>
    </source>
</evidence>
<evidence type="ECO:0000269" key="14">
    <source>
    </source>
</evidence>
<evidence type="ECO:0000269" key="15">
    <source>
    </source>
</evidence>
<evidence type="ECO:0000269" key="16">
    <source>
    </source>
</evidence>
<evidence type="ECO:0000269" key="17">
    <source>
    </source>
</evidence>
<evidence type="ECO:0000269" key="18">
    <source>
    </source>
</evidence>
<evidence type="ECO:0000269" key="19">
    <source>
    </source>
</evidence>
<evidence type="ECO:0000269" key="20">
    <source>
    </source>
</evidence>
<evidence type="ECO:0000269" key="21">
    <source>
    </source>
</evidence>
<evidence type="ECO:0000303" key="22">
    <source>
    </source>
</evidence>
<evidence type="ECO:0000303" key="23">
    <source ref="1"/>
</evidence>
<evidence type="ECO:0000305" key="24"/>
<evidence type="ECO:0000305" key="25">
    <source>
    </source>
</evidence>
<comment type="function">
    <molecule>Isoform 1</molecule>
    <text>Heparan sulfate basal lamina glycoprotein that plays a central role in the formation and the maintenance of the neuromuscular junction (NMJ) and directs key events in postsynaptic differentiation. Component of the AGRN-LRP4 receptor complex that induces the phosphorylation and activation of MUSK. The activation of MUSK in myotubes induces the formation of NMJ by regulating different processes including the transcription of specific genes and the clustering of AChR in the postsynaptic membrane. Calcium ions are required for maximal AChR clustering. AGRN function in neurons is highly regulated by alternative splicing, glycan binding and proteolytic processing. Modulates calcium ion homeostasis in neurons, specifically by inducing an increase in cytoplasmic calcium ions. Functions differentially in the central nervous system (CNS) by inhibiting the alpha(3)-subtype of Na+/K+-ATPase and evoking depolarization at CNS synapses. This secreted isoform forms a bridge, after release from motor neurons, to basal lamina through binding laminin via the NtA domain.</text>
</comment>
<comment type="function">
    <molecule>Isoform 2</molecule>
    <text>Transmembrane form that is the predominate form in neurons of the brain, induces dendritic filopodia and synapse formation in mature hippocampal neurons in large part due to the attached glycosaminoglycan chains and the action of Rho-family GTPases.</text>
</comment>
<comment type="function">
    <text>Isoform 1, isoform 4 and isoform 5: neuron-specific (z+) isoforms that contain C-terminal insertions of 8-19 AA are potent activators of AChR clustering. Isoform 5, agrin (z+8), containing the 8-AA insert, forms a receptor complex in myotubules containing the neuronal AGRN, the muscle-specific kinase MUSK and LRP4, a member of the LDL receptor family. The splicing factors, NOVA1 and NOVA2, regulate AGRN splicing and production of the 'z' isoforms.</text>
</comment>
<comment type="function">
    <text>Isoform 3 and isoform 6: lack any 'z' insert, are muscle-specific and may be involved in endothelial cell differentiation.</text>
</comment>
<comment type="function">
    <molecule>Agrin N-terminal 110 kDa subunit</molecule>
    <text evidence="1 15 17">Is involved in regulation of neurite outgrowth probably due to the presence of the glycosaminoglcan (GAG) side chains of heparan and chondroitin sulfate attached to the Ser/Thr- and Gly/Ser-rich regions. Also involved in modulation of growth factor signaling (By similarity).</text>
</comment>
<comment type="function">
    <molecule>Agrin C-terminal 22 kDa fragment</molecule>
    <text>This released fragment is important for agrin signaling and to exert a maximal dendritic filopodia-inducing effect. All 'z' splice variants (z+) of this fragment also show an increase in the number of filopodia.</text>
</comment>
<comment type="subunit">
    <text evidence="1 17 18 20">Monomer (By similarity). Interacts (N-terminal subunit) with TGF-beta family members, BMP2 and BMP4; the interactions inhibit the activity of these growth factors. Interacts with TGFB1; the interaction enhances the activity of TGFB1 (By similarity). Component of the AGRN-LRP4 complex that consists of a tetramer of two AGRN-LRP4 heterodimers. Interacts (via the laminin G-like 3 domain) directly with LRP4; the interaction is required for activation of MUSK and clustering of AChR and requires the 'z8' insert present in the z(+8) isoforms. Interacts with DAG1; the interaction is influenced by cell surface glycosaminoglycans and by alternative splicing of AGRN.</text>
</comment>
<comment type="interaction">
    <interactant intactId="EBI-947482">
        <id>O00468</id>
    </interactant>
    <interactant intactId="EBI-708350">
        <id>O15265</id>
        <label>ATXN7</label>
    </interactant>
    <organismsDiffer>false</organismsDiffer>
    <experiments>2</experiments>
</comment>
<comment type="interaction">
    <interactant intactId="EBI-17740588">
        <id>O00468-6</id>
    </interactant>
    <interactant intactId="EBI-11983447">
        <id>Q8N9W6-4</id>
        <label>BOLL</label>
    </interactant>
    <organismsDiffer>false</organismsDiffer>
    <experiments>3</experiments>
</comment>
<comment type="interaction">
    <interactant intactId="EBI-17740588">
        <id>O00468-6</id>
    </interactant>
    <interactant intactId="EBI-716006">
        <id>Q9Y5V3</id>
        <label>MAGED1</label>
    </interactant>
    <organismsDiffer>false</organismsDiffer>
    <experiments>3</experiments>
</comment>
<comment type="interaction">
    <interactant intactId="EBI-17740588">
        <id>O00468-6</id>
    </interactant>
    <interactant intactId="EBI-11139477">
        <id>Q96N21</id>
        <label>TEPSIN</label>
    </interactant>
    <organismsDiffer>false</organismsDiffer>
    <experiments>3</experiments>
</comment>
<comment type="subcellular location">
    <molecule>Isoform 1</molecule>
    <subcellularLocation>
        <location evidence="16">Secreted</location>
        <location evidence="16">Extracellular space</location>
        <location evidence="16">Extracellular matrix</location>
    </subcellularLocation>
    <text evidence="4">Synaptic basal lamina at the neuromuscular junction.</text>
</comment>
<comment type="subcellular location">
    <molecule>Isoform 2</molecule>
    <subcellularLocation>
        <location evidence="2">Synapse</location>
    </subcellularLocation>
    <subcellularLocation>
        <location evidence="2">Cell membrane</location>
        <topology evidence="2">Single-pass type II membrane protein</topology>
    </subcellularLocation>
</comment>
<comment type="alternative products">
    <event type="alternative splicing"/>
    <isoform>
        <id>O00468-1</id>
        <name>1</name>
        <name>Secreted agrin</name>
        <name>LN-agrin</name>
        <sequence type="displayed"/>
    </isoform>
    <isoform>
        <id>O00468-2</id>
        <name>2</name>
        <name>Transmembrane agrin</name>
        <name>TM-agrin</name>
        <sequence type="described" ref="VSP_045753 VSP_045754"/>
    </isoform>
    <isoform>
        <id>O00468-3</id>
        <name>3</name>
        <name>Agrin z(0)</name>
        <sequence type="described" ref="VSP_045756"/>
    </isoform>
    <isoform>
        <id>O00468-4</id>
        <name>4</name>
        <name>Agrin z(+11)</name>
        <sequence type="described" ref="VSP_045757"/>
    </isoform>
    <isoform>
        <id>O00468-5</id>
        <name>5</name>
        <name>Agrin z(+8)</name>
        <sequence type="described" ref="VSP_045758"/>
    </isoform>
    <isoform>
        <id>O00468-6</id>
        <name>6</name>
        <name>Agrin y(0)z(0)</name>
        <sequence type="described" ref="VSP_045755 VSP_045756"/>
    </isoform>
    <isoform>
        <id>O00468-7</id>
        <name>7</name>
        <name>y(0)</name>
        <sequence type="described" ref="VSP_045755"/>
    </isoform>
    <text>Many isoforms may exist depending on the occurrence and length of inserts at the x, y or z splice site. Four 'z' isoforms can be produced with inserts of 0, 8, 11 or 19 AA. Isoforms differ in their acetylcholine receptor clustering activity and tissue specificity.</text>
</comment>
<comment type="tissue specificity">
    <text evidence="13 16 21">Expressed in basement membranes of lung and kidney. Muscle- and neuron-specific isoforms are found. Isoforms (y+) with the 4 AA insert and (z+8) isoforms with the 8 AA insert are all neuron-specific. Isoforms (z+11) are found in both neuronal and non-neuronal tissues.</text>
</comment>
<comment type="domain">
    <text>The NtA domain, absent in TM-agrin, is required for binding laminin and connecting to basal lamina.</text>
</comment>
<comment type="domain">
    <text evidence="1">Both laminin G-like 2 (G2) and laminin G-like 3 (G3) domains are required for alpha-dystroglycan/DAG1 binding. G3 domain is required for C-terminal heparin, heparan sulfate and sialic acid binding (By similarity).</text>
</comment>
<comment type="PTM">
    <text evidence="1">Contains heparan and chondroitin sulfate chains and alpha-dystroglycan as well as N-linked and O-linked oligosaccharides. Glycosaminoglycans (GAGs), present in the N-terminal 110 kDa fragment, are required for induction of filopodia in hippocampal neurons. The first cluster (Gly/Ser-rich) for GAG attachment contains heparan sulfate (HS) chains and the second cluster (Ser/Thr-rich), contains chondroitin sulfate (CS) chains. Heparin and heparin sulfate binding in the G3 domain is independent of calcium ions. Binds heparin with a stoichiometry of 2:1. Binds sialic acid with a stoichiometry of 1:1 and binding requires calcium ions (By similarity).</text>
</comment>
<comment type="PTM">
    <text>At synaptic junctions, cleaved at two conserved sites, alpha and beta, by neurotrypsin. Cleavage at the alpha-site produces the agrin N-terminal 110-kDa subunit and the agrin C-terminal 110-kDa subunit. Further cleavage of agrin C-terminal 110-kDa subunit at the beta site produces the C-terminal fragments, agrin C-terminal 90 kDa fragment and agrin C-terminal 22 kDa fragment. Excessive cleavage at the beta-site releases large amounts of the agrin C-terminal 22 kDa fragment leading to destabilization at the neuromuscular junction (NMJ).</text>
</comment>
<comment type="disease" evidence="15 18 19">
    <disease id="DI-04109">
        <name>Myasthenic syndrome, congenital, 8</name>
        <acronym>CMS8</acronym>
        <description>A form of congenital myasthenic syndrome, a group of disorders characterized by failure of neuromuscular transmission, including pre-synaptic, synaptic, and post-synaptic disorders that are not of autoimmune origin. Clinical features are easy fatigability and muscle weakness. CMS8 is an autosomal recessive disease characterized by prominent defects of both the pre- and postsynaptic regions. Affected individuals have onset of muscle weakness in early childhood; the severity of the weakness and muscles affected is variable.</description>
        <dbReference type="MIM" id="615120"/>
    </disease>
    <text>The disease is caused by variants affecting the gene represented in this entry.</text>
</comment>
<comment type="miscellaneous">
    <text evidence="25">Cleaved C-terminal fragments may be used as a biomarker for sarcopenia, age-related progressive loss of skeletal muscle.</text>
</comment>
<comment type="miscellaneous">
    <molecule>Isoform 2</molecule>
    <text evidence="24">Produced by usage of an alternative first exon.</text>
</comment>
<comment type="caution">
    <text evidence="24">The unknown residue 'x' in the transmembrane isoform is probably a proline residue by similarity to mouse and rat sequences.</text>
</comment>
<comment type="online information" name="The Leiden Muscular Dystrophy pages, Agrin (AGRN)">
    <link uri="https://databases.lovd.nl/shared/genes/AGRN"/>
    <text>Leiden Open Variation Database (LOVD)</text>
</comment>
<protein>
    <recommendedName>
        <fullName>Agrin</fullName>
    </recommendedName>
    <component>
        <recommendedName>
            <fullName>Agrin N-terminal 110 kDa subunit</fullName>
        </recommendedName>
    </component>
    <component>
        <recommendedName>
            <fullName>Agrin C-terminal 110 kDa subunit</fullName>
        </recommendedName>
    </component>
    <component>
        <recommendedName>
            <fullName>Agrin C-terminal 90 kDa fragment</fullName>
            <shortName>C90</shortName>
        </recommendedName>
    </component>
    <component>
        <recommendedName>
            <fullName>Agrin C-terminal 22 kDa fragment</fullName>
            <shortName>C22</shortName>
        </recommendedName>
    </component>
</protein>
<proteinExistence type="evidence at protein level"/>
<name>AGRIN_HUMAN</name>
<gene>
    <name type="primary">AGRN</name>
    <name type="synonym">AGRIN</name>
</gene>
<accession>O00468</accession>
<accession>Q5SVA1</accession>
<accession>Q5SVA2</accession>
<accession>Q60FE1</accession>
<accession>Q7KYS8</accession>
<accession>Q8N4J5</accession>
<accession>Q96IC1</accession>
<accession>Q9BTD4</accession>
<dbReference type="EMBL" id="AB191264">
    <property type="protein sequence ID" value="BAD52440.1"/>
    <property type="molecule type" value="mRNA"/>
</dbReference>
<dbReference type="EMBL" id="AL645608">
    <property type="status" value="NOT_ANNOTATED_CDS"/>
    <property type="molecule type" value="Genomic_DNA"/>
</dbReference>
<dbReference type="EMBL" id="AF016903">
    <property type="protein sequence ID" value="AAC39776.1"/>
    <property type="molecule type" value="mRNA"/>
</dbReference>
<dbReference type="EMBL" id="U84406">
    <property type="protein sequence ID" value="AAB52917.1"/>
    <property type="molecule type" value="mRNA"/>
</dbReference>
<dbReference type="EMBL" id="BC004220">
    <property type="protein sequence ID" value="AAH04220.2"/>
    <property type="molecule type" value="mRNA"/>
</dbReference>
<dbReference type="EMBL" id="BC007649">
    <property type="protein sequence ID" value="AAH07649.1"/>
    <property type="molecule type" value="mRNA"/>
</dbReference>
<dbReference type="EMBL" id="BC034009">
    <property type="protein sequence ID" value="AAH34009.1"/>
    <property type="molecule type" value="mRNA"/>
</dbReference>
<dbReference type="EMBL" id="BC063620">
    <property type="protein sequence ID" value="AAH63620.1"/>
    <property type="molecule type" value="mRNA"/>
</dbReference>
<dbReference type="CCDS" id="CCDS30551.1">
    <molecule id="O00468-6"/>
</dbReference>
<dbReference type="RefSeq" id="NP_001292204.1">
    <molecule id="O00468-1"/>
    <property type="nucleotide sequence ID" value="NM_001305275.2"/>
</dbReference>
<dbReference type="RefSeq" id="NP_940978.2">
    <molecule id="O00468-6"/>
    <property type="nucleotide sequence ID" value="NM_198576.3"/>
</dbReference>
<dbReference type="RefSeq" id="XP_005244806.1">
    <molecule id="O00468-3"/>
    <property type="nucleotide sequence ID" value="XM_005244749.4"/>
</dbReference>
<dbReference type="RefSeq" id="XP_054192447.1">
    <molecule id="O00468-3"/>
    <property type="nucleotide sequence ID" value="XM_054336472.1"/>
</dbReference>
<dbReference type="PDB" id="8S9P">
    <property type="method" value="EM"/>
    <property type="resolution" value="3.80 A"/>
    <property type="chains" value="A=1-2068"/>
</dbReference>
<dbReference type="PDBsum" id="8S9P"/>
<dbReference type="EMDB" id="EMD-40241"/>
<dbReference type="SMR" id="O00468"/>
<dbReference type="BioGRID" id="132000">
    <property type="interactions" value="291"/>
</dbReference>
<dbReference type="FunCoup" id="O00468">
    <property type="interactions" value="416"/>
</dbReference>
<dbReference type="IntAct" id="O00468">
    <property type="interactions" value="51"/>
</dbReference>
<dbReference type="MINT" id="O00468"/>
<dbReference type="STRING" id="9606.ENSP00000368678"/>
<dbReference type="ChEMBL" id="CHEMBL4295648"/>
<dbReference type="TCDB" id="8.A.74.1.3">
    <property type="family name" value="the tm9 or phg1 targeting receptor (phg1) family"/>
</dbReference>
<dbReference type="UniLectin" id="O00468"/>
<dbReference type="CarbonylDB" id="O00468"/>
<dbReference type="GlyConnect" id="998">
    <property type="glycosylation" value="17 N-Linked glycans (4 sites)"/>
</dbReference>
<dbReference type="GlyCosmos" id="O00468">
    <property type="glycosylation" value="18 sites, 29 glycans"/>
</dbReference>
<dbReference type="GlyGen" id="O00468">
    <property type="glycosylation" value="52 sites, 108 N-linked glycans (4 sites), 13 O-linked glycans (45 sites)"/>
</dbReference>
<dbReference type="iPTMnet" id="O00468"/>
<dbReference type="PhosphoSitePlus" id="O00468"/>
<dbReference type="BioMuta" id="AGRN"/>
<dbReference type="jPOST" id="O00468"/>
<dbReference type="MassIVE" id="O00468"/>
<dbReference type="PaxDb" id="9606-ENSP00000368678"/>
<dbReference type="PeptideAtlas" id="O00468"/>
<dbReference type="ProteomicsDB" id="47914">
    <molecule id="O00468-1"/>
</dbReference>
<dbReference type="Pumba" id="O00468"/>
<dbReference type="Antibodypedia" id="12009">
    <property type="antibodies" value="206 antibodies from 27 providers"/>
</dbReference>
<dbReference type="DNASU" id="375790"/>
<dbReference type="Ensembl" id="ENST00000379370.7">
    <molecule id="O00468-6"/>
    <property type="protein sequence ID" value="ENSP00000368678.2"/>
    <property type="gene ID" value="ENSG00000188157.16"/>
</dbReference>
<dbReference type="GeneID" id="375790"/>
<dbReference type="KEGG" id="hsa:375790"/>
<dbReference type="MANE-Select" id="ENST00000379370.7">
    <molecule id="O00468-6"/>
    <property type="protein sequence ID" value="ENSP00000368678.2"/>
    <property type="RefSeq nucleotide sequence ID" value="NM_198576.4"/>
    <property type="RefSeq protein sequence ID" value="NP_940978.2"/>
</dbReference>
<dbReference type="UCSC" id="uc001ack.3">
    <molecule id="O00468-1"/>
    <property type="organism name" value="human"/>
</dbReference>
<dbReference type="AGR" id="HGNC:329"/>
<dbReference type="CTD" id="375790"/>
<dbReference type="DisGeNET" id="375790"/>
<dbReference type="GeneCards" id="AGRN"/>
<dbReference type="GeneReviews" id="AGRN"/>
<dbReference type="HGNC" id="HGNC:329">
    <property type="gene designation" value="AGRN"/>
</dbReference>
<dbReference type="HPA" id="ENSG00000188157">
    <property type="expression patterns" value="Low tissue specificity"/>
</dbReference>
<dbReference type="MalaCards" id="AGRN"/>
<dbReference type="MIM" id="103320">
    <property type="type" value="gene"/>
</dbReference>
<dbReference type="MIM" id="615120">
    <property type="type" value="phenotype"/>
</dbReference>
<dbReference type="neXtProt" id="NX_O00468"/>
<dbReference type="OpenTargets" id="ENSG00000188157"/>
<dbReference type="Orphanet" id="98913">
    <property type="disease" value="Postsynaptic congenital myasthenic syndromes"/>
</dbReference>
<dbReference type="Orphanet" id="98914">
    <property type="disease" value="Presynaptic congenital myasthenic syndromes"/>
</dbReference>
<dbReference type="PharmGKB" id="PA24626"/>
<dbReference type="VEuPathDB" id="HostDB:ENSG00000188157"/>
<dbReference type="eggNOG" id="KOG3509">
    <property type="taxonomic scope" value="Eukaryota"/>
</dbReference>
<dbReference type="GeneTree" id="ENSGT00940000158337"/>
<dbReference type="HOGENOM" id="CLU_001582_1_0_1"/>
<dbReference type="InParanoid" id="O00468"/>
<dbReference type="OMA" id="QKCTICT"/>
<dbReference type="OrthoDB" id="5983569at2759"/>
<dbReference type="PAN-GO" id="O00468">
    <property type="GO annotations" value="4 GO annotations based on evolutionary models"/>
</dbReference>
<dbReference type="TreeFam" id="TF326548"/>
<dbReference type="PathwayCommons" id="O00468"/>
<dbReference type="Reactome" id="R-HSA-1971475">
    <property type="pathway name" value="A tetrasaccharide linker sequence is required for GAG synthesis"/>
</dbReference>
<dbReference type="Reactome" id="R-HSA-2022928">
    <property type="pathway name" value="HS-GAG biosynthesis"/>
</dbReference>
<dbReference type="Reactome" id="R-HSA-2024096">
    <property type="pathway name" value="HS-GAG degradation"/>
</dbReference>
<dbReference type="Reactome" id="R-HSA-216083">
    <property type="pathway name" value="Integrin cell surface interactions"/>
</dbReference>
<dbReference type="Reactome" id="R-HSA-3000171">
    <property type="pathway name" value="Non-integrin membrane-ECM interactions"/>
</dbReference>
<dbReference type="Reactome" id="R-HSA-3000178">
    <property type="pathway name" value="ECM proteoglycans"/>
</dbReference>
<dbReference type="Reactome" id="R-HSA-3560783">
    <property type="pathway name" value="Defective B4GALT7 causes EDS, progeroid type"/>
</dbReference>
<dbReference type="Reactome" id="R-HSA-3560801">
    <property type="pathway name" value="Defective B3GAT3 causes JDSSDHD"/>
</dbReference>
<dbReference type="Reactome" id="R-HSA-3656237">
    <property type="pathway name" value="Defective EXT2 causes exostoses 2"/>
</dbReference>
<dbReference type="Reactome" id="R-HSA-3656253">
    <property type="pathway name" value="Defective EXT1 causes exostoses 1, TRPS2 and CHDS"/>
</dbReference>
<dbReference type="Reactome" id="R-HSA-419037">
    <property type="pathway name" value="NCAM1 interactions"/>
</dbReference>
<dbReference type="Reactome" id="R-HSA-4420332">
    <property type="pathway name" value="Defective B3GALT6 causes EDSP2 and SEMDJL1"/>
</dbReference>
<dbReference type="Reactome" id="R-HSA-9694614">
    <property type="pathway name" value="Attachment and Entry"/>
</dbReference>
<dbReference type="Reactome" id="R-HSA-975634">
    <property type="pathway name" value="Retinoid metabolism and transport"/>
</dbReference>
<dbReference type="Reactome" id="R-HSA-9820960">
    <property type="pathway name" value="Respiratory syncytial virus (RSV) attachment and entry"/>
</dbReference>
<dbReference type="Reactome" id="R-HSA-9833110">
    <property type="pathway name" value="RSV-host interactions"/>
</dbReference>
<dbReference type="Reactome" id="R-HSA-9913351">
    <property type="pathway name" value="Formation of the dystrophin-glycoprotein complex (DGC)"/>
</dbReference>
<dbReference type="SignaLink" id="O00468"/>
<dbReference type="SIGNOR" id="O00468"/>
<dbReference type="BioGRID-ORCS" id="375790">
    <property type="hits" value="11 hits in 1157 CRISPR screens"/>
</dbReference>
<dbReference type="ChiTaRS" id="AGRN">
    <property type="organism name" value="human"/>
</dbReference>
<dbReference type="GeneWiki" id="Agrin"/>
<dbReference type="GenomeRNAi" id="375790"/>
<dbReference type="Pharos" id="O00468">
    <property type="development level" value="Tbio"/>
</dbReference>
<dbReference type="PRO" id="PR:O00468"/>
<dbReference type="Proteomes" id="UP000005640">
    <property type="component" value="Chromosome 1"/>
</dbReference>
<dbReference type="RNAct" id="O00468">
    <property type="molecule type" value="protein"/>
</dbReference>
<dbReference type="Bgee" id="ENSG00000188157">
    <property type="expression patterns" value="Expressed in right uterine tube and 188 other cell types or tissues"/>
</dbReference>
<dbReference type="ExpressionAtlas" id="O00468">
    <property type="expression patterns" value="baseline and differential"/>
</dbReference>
<dbReference type="GO" id="GO:0005604">
    <property type="term" value="C:basement membrane"/>
    <property type="evidence" value="ECO:0000314"/>
    <property type="project" value="UniProtKB"/>
</dbReference>
<dbReference type="GO" id="GO:0062023">
    <property type="term" value="C:collagen-containing extracellular matrix"/>
    <property type="evidence" value="ECO:0000314"/>
    <property type="project" value="UniProtKB"/>
</dbReference>
<dbReference type="GO" id="GO:0070062">
    <property type="term" value="C:extracellular exosome"/>
    <property type="evidence" value="ECO:0007005"/>
    <property type="project" value="UniProtKB"/>
</dbReference>
<dbReference type="GO" id="GO:0005576">
    <property type="term" value="C:extracellular region"/>
    <property type="evidence" value="ECO:0000304"/>
    <property type="project" value="Reactome"/>
</dbReference>
<dbReference type="GO" id="GO:0005796">
    <property type="term" value="C:Golgi lumen"/>
    <property type="evidence" value="ECO:0000304"/>
    <property type="project" value="Reactome"/>
</dbReference>
<dbReference type="GO" id="GO:0043202">
    <property type="term" value="C:lysosomal lumen"/>
    <property type="evidence" value="ECO:0000304"/>
    <property type="project" value="Reactome"/>
</dbReference>
<dbReference type="GO" id="GO:0005886">
    <property type="term" value="C:plasma membrane"/>
    <property type="evidence" value="ECO:0000304"/>
    <property type="project" value="Reactome"/>
</dbReference>
<dbReference type="GO" id="GO:0045202">
    <property type="term" value="C:synapse"/>
    <property type="evidence" value="ECO:0000250"/>
    <property type="project" value="UniProtKB"/>
</dbReference>
<dbReference type="GO" id="GO:0005509">
    <property type="term" value="F:calcium ion binding"/>
    <property type="evidence" value="ECO:0000250"/>
    <property type="project" value="UniProtKB"/>
</dbReference>
<dbReference type="GO" id="GO:0035374">
    <property type="term" value="F:chondroitin sulfate binding"/>
    <property type="evidence" value="ECO:0000250"/>
    <property type="project" value="UniProtKB"/>
</dbReference>
<dbReference type="GO" id="GO:0002162">
    <property type="term" value="F:dystroglycan binding"/>
    <property type="evidence" value="ECO:0000250"/>
    <property type="project" value="UniProtKB"/>
</dbReference>
<dbReference type="GO" id="GO:0043395">
    <property type="term" value="F:heparan sulfate proteoglycan binding"/>
    <property type="evidence" value="ECO:0000250"/>
    <property type="project" value="UniProtKB"/>
</dbReference>
<dbReference type="GO" id="GO:0043236">
    <property type="term" value="F:laminin binding"/>
    <property type="evidence" value="ECO:0000304"/>
    <property type="project" value="UniProtKB"/>
</dbReference>
<dbReference type="GO" id="GO:0033691">
    <property type="term" value="F:sialic acid binding"/>
    <property type="evidence" value="ECO:0000250"/>
    <property type="project" value="UniProtKB"/>
</dbReference>
<dbReference type="GO" id="GO:0005200">
    <property type="term" value="F:structural constituent of cytoskeleton"/>
    <property type="evidence" value="ECO:0000304"/>
    <property type="project" value="UniProtKB"/>
</dbReference>
<dbReference type="GO" id="GO:0045162">
    <property type="term" value="P:clustering of voltage-gated sodium channels"/>
    <property type="evidence" value="ECO:0000304"/>
    <property type="project" value="UniProtKB"/>
</dbReference>
<dbReference type="GO" id="GO:0007213">
    <property type="term" value="P:G protein-coupled acetylcholine receptor signaling pathway"/>
    <property type="evidence" value="ECO:0000304"/>
    <property type="project" value="UniProtKB"/>
</dbReference>
<dbReference type="GO" id="GO:0007528">
    <property type="term" value="P:neuromuscular junction development"/>
    <property type="evidence" value="ECO:0000318"/>
    <property type="project" value="GO_Central"/>
</dbReference>
<dbReference type="GO" id="GO:0051491">
    <property type="term" value="P:positive regulation of filopodium assembly"/>
    <property type="evidence" value="ECO:0000250"/>
    <property type="project" value="UniProtKB"/>
</dbReference>
<dbReference type="GO" id="GO:0043547">
    <property type="term" value="P:positive regulation of GTPase activity"/>
    <property type="evidence" value="ECO:0000250"/>
    <property type="project" value="UniProtKB"/>
</dbReference>
<dbReference type="GO" id="GO:0045887">
    <property type="term" value="P:positive regulation of synaptic assembly at neuromuscular junction"/>
    <property type="evidence" value="ECO:0000250"/>
    <property type="project" value="UniProtKB"/>
</dbReference>
<dbReference type="GO" id="GO:0045944">
    <property type="term" value="P:positive regulation of transcription by RNA polymerase II"/>
    <property type="evidence" value="ECO:0000250"/>
    <property type="project" value="UniProtKB"/>
</dbReference>
<dbReference type="GO" id="GO:0043113">
    <property type="term" value="P:receptor clustering"/>
    <property type="evidence" value="ECO:0000314"/>
    <property type="project" value="UniProtKB"/>
</dbReference>
<dbReference type="GO" id="GO:0007165">
    <property type="term" value="P:signal transduction"/>
    <property type="evidence" value="ECO:0000304"/>
    <property type="project" value="UniProtKB"/>
</dbReference>
<dbReference type="GO" id="GO:0050808">
    <property type="term" value="P:synapse organization"/>
    <property type="evidence" value="ECO:0000304"/>
    <property type="project" value="UniProtKB"/>
</dbReference>
<dbReference type="CDD" id="cd00054">
    <property type="entry name" value="EGF_CA"/>
    <property type="match status" value="3"/>
</dbReference>
<dbReference type="CDD" id="cd00055">
    <property type="entry name" value="EGF_Lam"/>
    <property type="match status" value="2"/>
</dbReference>
<dbReference type="CDD" id="cd00104">
    <property type="entry name" value="KAZAL_FS"/>
    <property type="match status" value="9"/>
</dbReference>
<dbReference type="CDD" id="cd00110">
    <property type="entry name" value="LamG"/>
    <property type="match status" value="3"/>
</dbReference>
<dbReference type="FunFam" id="2.10.25.10:FF:000692">
    <property type="entry name" value="Agrin"/>
    <property type="match status" value="1"/>
</dbReference>
<dbReference type="FunFam" id="3.30.60.30:FF:000013">
    <property type="entry name" value="Agrin"/>
    <property type="match status" value="1"/>
</dbReference>
<dbReference type="FunFam" id="3.30.60.30:FF:000016">
    <property type="entry name" value="Agrin"/>
    <property type="match status" value="1"/>
</dbReference>
<dbReference type="FunFam" id="3.30.60.30:FF:000032">
    <property type="entry name" value="Agrin"/>
    <property type="match status" value="1"/>
</dbReference>
<dbReference type="FunFam" id="2.10.25.10:FF:000228">
    <property type="entry name" value="agrin isoform X1"/>
    <property type="match status" value="1"/>
</dbReference>
<dbReference type="FunFam" id="2.40.50.120:FF:000008">
    <property type="entry name" value="agrin isoform X1"/>
    <property type="match status" value="1"/>
</dbReference>
<dbReference type="FunFam" id="2.10.25.10:FF:000095">
    <property type="entry name" value="Notch, isoform B"/>
    <property type="match status" value="1"/>
</dbReference>
<dbReference type="FunFam" id="2.60.120.200:FF:000031">
    <property type="entry name" value="NtA agrin"/>
    <property type="match status" value="1"/>
</dbReference>
<dbReference type="FunFam" id="3.30.60.30:FF:000019">
    <property type="entry name" value="NtA agrin"/>
    <property type="match status" value="1"/>
</dbReference>
<dbReference type="FunFam" id="3.30.70.960:FF:000001">
    <property type="entry name" value="NtA agrin"/>
    <property type="match status" value="1"/>
</dbReference>
<dbReference type="FunFam" id="2.10.25.10:FF:000134">
    <property type="entry name" value="Transmembrane agrin"/>
    <property type="match status" value="1"/>
</dbReference>
<dbReference type="FunFam" id="2.10.25.10:FF:000140">
    <property type="entry name" value="Transmembrane agrin"/>
    <property type="match status" value="1"/>
</dbReference>
<dbReference type="FunFam" id="2.60.120.200:FF:000027">
    <property type="entry name" value="Transmembrane agrin"/>
    <property type="match status" value="1"/>
</dbReference>
<dbReference type="FunFam" id="2.60.120.200:FF:000045">
    <property type="entry name" value="Transmembrane agrin"/>
    <property type="match status" value="1"/>
</dbReference>
<dbReference type="FunFam" id="3.30.60.30:FF:000008">
    <property type="entry name" value="Transmembrane agrin"/>
    <property type="match status" value="1"/>
</dbReference>
<dbReference type="FunFam" id="3.30.60.30:FF:000015">
    <property type="entry name" value="Transmembrane agrin"/>
    <property type="match status" value="1"/>
</dbReference>
<dbReference type="FunFam" id="3.30.60.30:FF:000018">
    <property type="entry name" value="Transmembrane agrin"/>
    <property type="match status" value="1"/>
</dbReference>
<dbReference type="FunFam" id="3.30.60.30:FF:000022">
    <property type="entry name" value="Transmembrane agrin"/>
    <property type="match status" value="1"/>
</dbReference>
<dbReference type="FunFam" id="3.30.60.30:FF:000024">
    <property type="entry name" value="Transmembrane agrin"/>
    <property type="match status" value="1"/>
</dbReference>
<dbReference type="Gene3D" id="2.40.50.120">
    <property type="match status" value="1"/>
</dbReference>
<dbReference type="Gene3D" id="2.60.120.200">
    <property type="match status" value="3"/>
</dbReference>
<dbReference type="Gene3D" id="3.30.60.30">
    <property type="match status" value="9"/>
</dbReference>
<dbReference type="Gene3D" id="2.10.25.10">
    <property type="entry name" value="Laminin"/>
    <property type="match status" value="5"/>
</dbReference>
<dbReference type="Gene3D" id="3.30.70.960">
    <property type="entry name" value="SEA domain"/>
    <property type="match status" value="1"/>
</dbReference>
<dbReference type="InterPro" id="IPR013320">
    <property type="entry name" value="ConA-like_dom_sf"/>
</dbReference>
<dbReference type="InterPro" id="IPR001881">
    <property type="entry name" value="EGF-like_Ca-bd_dom"/>
</dbReference>
<dbReference type="InterPro" id="IPR000742">
    <property type="entry name" value="EGF-like_dom"/>
</dbReference>
<dbReference type="InterPro" id="IPR003884">
    <property type="entry name" value="FacI_MAC"/>
</dbReference>
<dbReference type="InterPro" id="IPR003645">
    <property type="entry name" value="Fol_N"/>
</dbReference>
<dbReference type="InterPro" id="IPR002350">
    <property type="entry name" value="Kazal_dom"/>
</dbReference>
<dbReference type="InterPro" id="IPR036058">
    <property type="entry name" value="Kazal_dom_sf"/>
</dbReference>
<dbReference type="InterPro" id="IPR001791">
    <property type="entry name" value="Laminin_G"/>
</dbReference>
<dbReference type="InterPro" id="IPR002049">
    <property type="entry name" value="LE_dom"/>
</dbReference>
<dbReference type="InterPro" id="IPR050372">
    <property type="entry name" value="Neurexin-related_CASP"/>
</dbReference>
<dbReference type="InterPro" id="IPR004850">
    <property type="entry name" value="NtA_dom"/>
</dbReference>
<dbReference type="InterPro" id="IPR000082">
    <property type="entry name" value="SEA_dom"/>
</dbReference>
<dbReference type="InterPro" id="IPR036364">
    <property type="entry name" value="SEA_dom_sf"/>
</dbReference>
<dbReference type="InterPro" id="IPR008993">
    <property type="entry name" value="TIMP-like_OB-fold"/>
</dbReference>
<dbReference type="PANTHER" id="PTHR15036:SF83">
    <property type="entry name" value="AGRIN"/>
    <property type="match status" value="1"/>
</dbReference>
<dbReference type="PANTHER" id="PTHR15036">
    <property type="entry name" value="PIKACHURIN-LIKE PROTEIN"/>
    <property type="match status" value="1"/>
</dbReference>
<dbReference type="Pfam" id="PF00008">
    <property type="entry name" value="EGF"/>
    <property type="match status" value="2"/>
</dbReference>
<dbReference type="Pfam" id="PF00053">
    <property type="entry name" value="EGF_laminin"/>
    <property type="match status" value="2"/>
</dbReference>
<dbReference type="Pfam" id="PF00050">
    <property type="entry name" value="Kazal_1"/>
    <property type="match status" value="1"/>
</dbReference>
<dbReference type="Pfam" id="PF07648">
    <property type="entry name" value="Kazal_2"/>
    <property type="match status" value="8"/>
</dbReference>
<dbReference type="Pfam" id="PF00054">
    <property type="entry name" value="Laminin_G_1"/>
    <property type="match status" value="3"/>
</dbReference>
<dbReference type="Pfam" id="PF03146">
    <property type="entry name" value="NtA"/>
    <property type="match status" value="1"/>
</dbReference>
<dbReference type="Pfam" id="PF01390">
    <property type="entry name" value="SEA"/>
    <property type="match status" value="1"/>
</dbReference>
<dbReference type="PRINTS" id="PR00011">
    <property type="entry name" value="EGFLAMININ"/>
</dbReference>
<dbReference type="SMART" id="SM00181">
    <property type="entry name" value="EGF"/>
    <property type="match status" value="7"/>
</dbReference>
<dbReference type="SMART" id="SM00179">
    <property type="entry name" value="EGF_CA"/>
    <property type="match status" value="3"/>
</dbReference>
<dbReference type="SMART" id="SM00180">
    <property type="entry name" value="EGF_Lam"/>
    <property type="match status" value="2"/>
</dbReference>
<dbReference type="SMART" id="SM00057">
    <property type="entry name" value="FIMAC"/>
    <property type="match status" value="4"/>
</dbReference>
<dbReference type="SMART" id="SM00274">
    <property type="entry name" value="FOLN"/>
    <property type="match status" value="5"/>
</dbReference>
<dbReference type="SMART" id="SM00280">
    <property type="entry name" value="KAZAL"/>
    <property type="match status" value="9"/>
</dbReference>
<dbReference type="SMART" id="SM00282">
    <property type="entry name" value="LamG"/>
    <property type="match status" value="3"/>
</dbReference>
<dbReference type="SMART" id="SM00200">
    <property type="entry name" value="SEA"/>
    <property type="match status" value="1"/>
</dbReference>
<dbReference type="SUPFAM" id="SSF49899">
    <property type="entry name" value="Concanavalin A-like lectins/glucanases"/>
    <property type="match status" value="3"/>
</dbReference>
<dbReference type="SUPFAM" id="SSF57196">
    <property type="entry name" value="EGF/Laminin"/>
    <property type="match status" value="3"/>
</dbReference>
<dbReference type="SUPFAM" id="SSF100895">
    <property type="entry name" value="Kazal-type serine protease inhibitors"/>
    <property type="match status" value="9"/>
</dbReference>
<dbReference type="SUPFAM" id="SSF82671">
    <property type="entry name" value="SEA domain"/>
    <property type="match status" value="1"/>
</dbReference>
<dbReference type="SUPFAM" id="SSF50242">
    <property type="entry name" value="TIMP-like"/>
    <property type="match status" value="1"/>
</dbReference>
<dbReference type="PROSITE" id="PS00022">
    <property type="entry name" value="EGF_1"/>
    <property type="match status" value="6"/>
</dbReference>
<dbReference type="PROSITE" id="PS01186">
    <property type="entry name" value="EGF_2"/>
    <property type="match status" value="1"/>
</dbReference>
<dbReference type="PROSITE" id="PS50026">
    <property type="entry name" value="EGF_3"/>
    <property type="match status" value="4"/>
</dbReference>
<dbReference type="PROSITE" id="PS01248">
    <property type="entry name" value="EGF_LAM_1"/>
    <property type="match status" value="1"/>
</dbReference>
<dbReference type="PROSITE" id="PS50027">
    <property type="entry name" value="EGF_LAM_2"/>
    <property type="match status" value="2"/>
</dbReference>
<dbReference type="PROSITE" id="PS51465">
    <property type="entry name" value="KAZAL_2"/>
    <property type="match status" value="9"/>
</dbReference>
<dbReference type="PROSITE" id="PS50025">
    <property type="entry name" value="LAM_G_DOMAIN"/>
    <property type="match status" value="3"/>
</dbReference>
<dbReference type="PROSITE" id="PS51121">
    <property type="entry name" value="NTA"/>
    <property type="match status" value="1"/>
</dbReference>
<dbReference type="PROSITE" id="PS50024">
    <property type="entry name" value="SEA"/>
    <property type="match status" value="1"/>
</dbReference>
<sequence length="2068" mass="217320">MAGRSHPGPLRPLLPLLVVAACVLPGAGGTCPERALERREEEANVVLTGTVEEILNVDPVQHTYSCKVRVWRYLKGKDLVARESLLDGGNKVVISGFGDPLICDNQVSTGDTRIFFVNPAPPYLWPAHKNELMLNSSLMRITLRNLEEVEFCVEDKPGTHFTPVPPTPPDACRGMLCGFGAVCEPNAEGPGRASCVCKKSPCPSVVAPVCGSDASTYSNECELQRAQCSQQRRIRLLSRGPCGSRDPCSNVTCSFGSTCARSADGLTASCLCPATCRGAPEGTVCGSDGADYPGECQLLRRACARQENVFKKFDGPCDPCQGALPDPSRSCRVNPRTRRPEMLLRPESCPARQAPVCGDDGVTYENDCVMGRSGAARGLLLQKVRSGQCQGRDQCPEPCRFNAVCLSRRGRPRCSCDRVTCDGAYRPVCAQDGRTYDSDCWRQQAECRQQRAIPSKHQGPCDQAPSPCLGVQCAFGATCAVKNGQAACECLQACSSLYDPVCGSDGVTYGSACELEATACTLGREIQVARKGPCDRCGQCRFGALCEAETGRCVCPSECVALAQPVCGSDGHTYPSECMLHVHACTHQISLHVASAGPCETCGDAVCAFGAVCSAGQCVCPRCEHPPPGPVCGSDGVTYGSACELREAACLQQTQIEEARAGPCEQAECGSGGSGSGEDGDCEQELCRQRGGIWDEDSEDGPCVCDFSCQSVPGSPVCGSDGVTYSTECELKKARCESQRGLYVAAQGACRGPTFAPLPPVAPLHCAQTPYGCCQDNITAARGVGLAGCPSACQCNPHGSYGGTCDPATGQCSCRPGVGGLRCDRCEPGFWNFRGIVTDGRSGCTPCSCDPQGAVRDDCEQMTGLCSCKPGVAGPKCGQCPDGRALGPAGCEADASAPATCAEMRCEFGARCVEESGSAHCVCPMLTCPEANATKVCGSDGVTYGNECQLKTIACRQGLQISIQSLGPCQEAVAPSTHPTSASVTVTTPGLLLSQALPAPPGALPLAPSSTAHSQTTPPPSSRPRTTASVPRTTVWPVLTVPPTAPSPAPSLVASAFGESGSTDGSSDEELSGDQEASGGGSGGLEPLEGSSVATPGPPVERASCYNSALGCCSDGKTPSLDAEGSNCPATKVFQGVLELEGVEGQELFYTPEMADPKSELFGETARSIESTLDDLFRNSDVKKDFRSVRLRDLGPGKSVRAIVDVHFDPTTAFRAPDVARALLRQIQVSRRRSLGVRRPLQEHVRFMDFDWFPAFITGATSGAIAAGATARATTASRLPSSAVTPRAPHPSHTSQPVAKTTAAPTTRRPPTTAPSRVPGRRPPAPQQPPKPCDSQPCFHGGTCQDWALGGGFTCSCPAGRGGAVCEKVLGAPVPAFEGRSFLAFPTLRAYHTLRLALEFRALEPQGLLLYNGNARGKDFLALALLDGRVQLRFDTGSGPAVLTSAVPVEPGQWHRLELSRHWRRGTLSVDGETPVLGESPSGTDGLNLDTDLFVGGVPEDQAAVALERTFVGAGLRGCIRLLDVNNQRLELGIGPGAATRGSGVGECGDHPCLPNPCHGGAPCQNLEAGRFHCQCPPGRVGPTCADEKSPCQPNPCHGAAPCRVLPEGGAQCECPLGREGTFCQTASGQDGSGPFLADFNGFSHLELRGLHTFARDLGEKMALEVVFLARGPSGLLLYNGQKTDGKGDFVSLALRDRRLEFRYDLGKGAAVIRSREPVTLGAWTRVSLERNGRKGALRVGDGPRVLGESPKSRKVPHTVLNLKEPLYVGGAPDFSKLARAAAVSSGFDGAIQLVSLGGRQLLTPEHVLRQVDVTSFAGHPCTRASGHPCLNGASCVPREAAYVCLCPGGFSGPHCEKGLVEKSAGDVDTLAFDGRTFVEYLNAVTESELANEIPVPETLDSGALHSEKALQSNHFELSLRTEATQGLVLWSGKATERADYVALAIVDGHLQLSYNLGSQPVVLRSTVPVNTNRWLRVVAHREQREGSLQVGNEAPVTGSSPLGATQLDTDGALWLGGLPELPVGPALPKAYGTGFVGCLRDVVVGRHPLHLLEDAVTKPELRPCPTP</sequence>